<accession>B1MZ49</accession>
<comment type="subunit">
    <text evidence="1">Homodimer.</text>
</comment>
<comment type="similarity">
    <text evidence="1">Belongs to the UPF0210 family.</text>
</comment>
<name>Y974_LEUCK</name>
<organism>
    <name type="scientific">Leuconostoc citreum (strain KM20)</name>
    <dbReference type="NCBI Taxonomy" id="349519"/>
    <lineage>
        <taxon>Bacteria</taxon>
        <taxon>Bacillati</taxon>
        <taxon>Bacillota</taxon>
        <taxon>Bacilli</taxon>
        <taxon>Lactobacillales</taxon>
        <taxon>Lactobacillaceae</taxon>
        <taxon>Leuconostoc</taxon>
    </lineage>
</organism>
<sequence>METSQITETINMVSEEHLDIRTVTMGISLLDTVAGTPQETAKNIYHKITTYAKNLVAVAQQIEREFGIPITNKRISVTPIALIAGKATPDDMLYYAHALDDAAKAVGVDFIGGYSALVQKGFANGDLALIKSMPRALTETDLVMSSVNIGSSKAGINLDAVKLMGETIKAITDKSDTANAKLVVFANAVEDNPFMAGAFHGVTEADVVINVGVSGPGVVKRALEKVKGEPIQIVAETVKKTAFKITRVGQMVGALAAERLGVEFGIVDLSLAPTPARGDSVAEVLEEIGLEMVGTHGTTAALMLLNDAVKKGGVMASQRVGGLSGAFIPVSEDAGMIDAVEAGILSLAKLEAMTSVCSVGLDMIAVPGDTEATTISAMIADEAAIGVQNNKTTAVRILPTNGTKVGDMVDYGGLLGTAPVMPVVPKSSADFINRGGHIPAPIHSFKN</sequence>
<gene>
    <name type="ordered locus">LCK_00974</name>
</gene>
<feature type="chain" id="PRO_1000139230" description="UPF0210 protein LCK_00974">
    <location>
        <begin position="1"/>
        <end position="447"/>
    </location>
</feature>
<proteinExistence type="inferred from homology"/>
<reference key="1">
    <citation type="journal article" date="2008" name="J. Bacteriol.">
        <title>Complete genome sequence of Leuconostoc citreum KM20.</title>
        <authorList>
            <person name="Kim J.F."/>
            <person name="Jeong H."/>
            <person name="Lee J.-S."/>
            <person name="Choi S.-H."/>
            <person name="Ha M."/>
            <person name="Hur C.-G."/>
            <person name="Kim J.-S."/>
            <person name="Lee S."/>
            <person name="Park H.-S."/>
            <person name="Park Y.-H."/>
            <person name="Oh T.K."/>
        </authorList>
    </citation>
    <scope>NUCLEOTIDE SEQUENCE [LARGE SCALE GENOMIC DNA]</scope>
    <source>
        <strain>KM20</strain>
    </source>
</reference>
<evidence type="ECO:0000255" key="1">
    <source>
        <dbReference type="HAMAP-Rule" id="MF_01221"/>
    </source>
</evidence>
<protein>
    <recommendedName>
        <fullName evidence="1">UPF0210 protein LCK_00974</fullName>
    </recommendedName>
</protein>
<dbReference type="EMBL" id="DQ489736">
    <property type="protein sequence ID" value="ACA82801.1"/>
    <property type="molecule type" value="Genomic_DNA"/>
</dbReference>
<dbReference type="RefSeq" id="WP_012305260.1">
    <property type="nucleotide sequence ID" value="NC_010471.1"/>
</dbReference>
<dbReference type="SMR" id="B1MZ49"/>
<dbReference type="STRING" id="349519.LCK_00974"/>
<dbReference type="KEGG" id="lci:LCK_00974"/>
<dbReference type="eggNOG" id="COG2848">
    <property type="taxonomic scope" value="Bacteria"/>
</dbReference>
<dbReference type="HOGENOM" id="CLU_048704_0_0_9"/>
<dbReference type="OrthoDB" id="9763001at2"/>
<dbReference type="Proteomes" id="UP000002166">
    <property type="component" value="Chromosome"/>
</dbReference>
<dbReference type="CDD" id="cd08025">
    <property type="entry name" value="RNR_PFL_like_DUF711"/>
    <property type="match status" value="1"/>
</dbReference>
<dbReference type="Gene3D" id="3.20.70.20">
    <property type="match status" value="1"/>
</dbReference>
<dbReference type="HAMAP" id="MF_01221">
    <property type="entry name" value="UPF0210"/>
    <property type="match status" value="1"/>
</dbReference>
<dbReference type="InterPro" id="IPR007841">
    <property type="entry name" value="UPF0210"/>
</dbReference>
<dbReference type="NCBIfam" id="NF003700">
    <property type="entry name" value="PRK05313.1"/>
    <property type="match status" value="1"/>
</dbReference>
<dbReference type="PANTHER" id="PTHR37560:SF1">
    <property type="entry name" value="UPF0210 PROTEIN MJ1665"/>
    <property type="match status" value="1"/>
</dbReference>
<dbReference type="PANTHER" id="PTHR37560">
    <property type="entry name" value="UPF0210 PROTEIN SPR0218"/>
    <property type="match status" value="1"/>
</dbReference>
<dbReference type="Pfam" id="PF05167">
    <property type="entry name" value="DUF711"/>
    <property type="match status" value="1"/>
</dbReference>
<dbReference type="SUPFAM" id="SSF51998">
    <property type="entry name" value="PFL-like glycyl radical enzymes"/>
    <property type="match status" value="1"/>
</dbReference>
<keyword id="KW-1185">Reference proteome</keyword>